<organism>
    <name type="scientific">Bacteroides thetaiotaomicron (strain ATCC 29148 / DSM 2079 / JCM 5827 / CCUG 10774 / NCTC 10582 / VPI-5482 / E50)</name>
    <dbReference type="NCBI Taxonomy" id="226186"/>
    <lineage>
        <taxon>Bacteria</taxon>
        <taxon>Pseudomonadati</taxon>
        <taxon>Bacteroidota</taxon>
        <taxon>Bacteroidia</taxon>
        <taxon>Bacteroidales</taxon>
        <taxon>Bacteroidaceae</taxon>
        <taxon>Bacteroides</taxon>
    </lineage>
</organism>
<keyword id="KW-0963">Cytoplasm</keyword>
<keyword id="KW-0489">Methyltransferase</keyword>
<keyword id="KW-1185">Reference proteome</keyword>
<keyword id="KW-0698">rRNA processing</keyword>
<keyword id="KW-0949">S-adenosyl-L-methionine</keyword>
<keyword id="KW-0808">Transferase</keyword>
<sequence>MEIILKYFPDLTEEQRKQFAALYDLYIDWNAKINVISRKDIENLYEHHVLHSLGIAKVIQFRPGTKVMDLGTGGGFPGIPLAILFPETKFHLVDSIGKKVRVATEVANAIGLKNVTFRHARAEEEKQLFDFVVSRAVMPLADLIKIIKKNISPKQQNAMPNGLICLKGGELEHETMPFKHKTVIHSLSENFEEEFFETKKVVYSQI</sequence>
<proteinExistence type="inferred from homology"/>
<feature type="chain" id="PRO_0000184217" description="Ribosomal RNA small subunit methyltransferase G">
    <location>
        <begin position="1"/>
        <end position="206"/>
    </location>
</feature>
<feature type="binding site" evidence="1">
    <location>
        <position position="71"/>
    </location>
    <ligand>
        <name>S-adenosyl-L-methionine</name>
        <dbReference type="ChEBI" id="CHEBI:59789"/>
    </ligand>
</feature>
<feature type="binding site" evidence="1">
    <location>
        <position position="76"/>
    </location>
    <ligand>
        <name>S-adenosyl-L-methionine</name>
        <dbReference type="ChEBI" id="CHEBI:59789"/>
    </ligand>
</feature>
<feature type="binding site" evidence="1">
    <location>
        <begin position="122"/>
        <end position="123"/>
    </location>
    <ligand>
        <name>S-adenosyl-L-methionine</name>
        <dbReference type="ChEBI" id="CHEBI:59789"/>
    </ligand>
</feature>
<feature type="binding site" evidence="1">
    <location>
        <position position="135"/>
    </location>
    <ligand>
        <name>S-adenosyl-L-methionine</name>
        <dbReference type="ChEBI" id="CHEBI:59789"/>
    </ligand>
</feature>
<protein>
    <recommendedName>
        <fullName evidence="1">Ribosomal RNA small subunit methyltransferase G</fullName>
        <ecNumber evidence="1">2.1.1.-</ecNumber>
    </recommendedName>
    <alternativeName>
        <fullName evidence="1">16S rRNA 7-methylguanosine methyltransferase</fullName>
        <shortName evidence="1">16S rRNA m7G methyltransferase</shortName>
    </alternativeName>
</protein>
<dbReference type="EC" id="2.1.1.-" evidence="1"/>
<dbReference type="EMBL" id="AE015928">
    <property type="protein sequence ID" value="AAO76252.1"/>
    <property type="molecule type" value="Genomic_DNA"/>
</dbReference>
<dbReference type="RefSeq" id="NP_810058.1">
    <property type="nucleotide sequence ID" value="NC_004663.1"/>
</dbReference>
<dbReference type="RefSeq" id="WP_008765865.1">
    <property type="nucleotide sequence ID" value="NC_004663.1"/>
</dbReference>
<dbReference type="SMR" id="Q8A8M2"/>
<dbReference type="FunCoup" id="Q8A8M2">
    <property type="interactions" value="442"/>
</dbReference>
<dbReference type="STRING" id="226186.BT_1145"/>
<dbReference type="PaxDb" id="226186-BT_1145"/>
<dbReference type="EnsemblBacteria" id="AAO76252">
    <property type="protein sequence ID" value="AAO76252"/>
    <property type="gene ID" value="BT_1145"/>
</dbReference>
<dbReference type="GeneID" id="60927122"/>
<dbReference type="KEGG" id="bth:BT_1145"/>
<dbReference type="PATRIC" id="fig|226186.12.peg.1167"/>
<dbReference type="eggNOG" id="COG0357">
    <property type="taxonomic scope" value="Bacteria"/>
</dbReference>
<dbReference type="HOGENOM" id="CLU_065341_2_2_10"/>
<dbReference type="InParanoid" id="Q8A8M2"/>
<dbReference type="OrthoDB" id="9808773at2"/>
<dbReference type="Proteomes" id="UP000001414">
    <property type="component" value="Chromosome"/>
</dbReference>
<dbReference type="GO" id="GO:0005829">
    <property type="term" value="C:cytosol"/>
    <property type="evidence" value="ECO:0000318"/>
    <property type="project" value="GO_Central"/>
</dbReference>
<dbReference type="GO" id="GO:0070043">
    <property type="term" value="F:rRNA (guanine-N7-)-methyltransferase activity"/>
    <property type="evidence" value="ECO:0000318"/>
    <property type="project" value="GO_Central"/>
</dbReference>
<dbReference type="CDD" id="cd02440">
    <property type="entry name" value="AdoMet_MTases"/>
    <property type="match status" value="1"/>
</dbReference>
<dbReference type="FunFam" id="3.40.50.150:FF:000429">
    <property type="entry name" value="Ribosomal RNA small subunit methyltransferase G"/>
    <property type="match status" value="1"/>
</dbReference>
<dbReference type="Gene3D" id="3.40.50.150">
    <property type="entry name" value="Vaccinia Virus protein VP39"/>
    <property type="match status" value="1"/>
</dbReference>
<dbReference type="HAMAP" id="MF_00074">
    <property type="entry name" value="16SrRNA_methyltr_G"/>
    <property type="match status" value="1"/>
</dbReference>
<dbReference type="InterPro" id="IPR003682">
    <property type="entry name" value="rRNA_ssu_MeTfrase_G"/>
</dbReference>
<dbReference type="InterPro" id="IPR029063">
    <property type="entry name" value="SAM-dependent_MTases_sf"/>
</dbReference>
<dbReference type="NCBIfam" id="TIGR00138">
    <property type="entry name" value="rsmG_gidB"/>
    <property type="match status" value="1"/>
</dbReference>
<dbReference type="PANTHER" id="PTHR31760">
    <property type="entry name" value="S-ADENOSYL-L-METHIONINE-DEPENDENT METHYLTRANSFERASES SUPERFAMILY PROTEIN"/>
    <property type="match status" value="1"/>
</dbReference>
<dbReference type="PANTHER" id="PTHR31760:SF0">
    <property type="entry name" value="S-ADENOSYL-L-METHIONINE-DEPENDENT METHYLTRANSFERASES SUPERFAMILY PROTEIN"/>
    <property type="match status" value="1"/>
</dbReference>
<dbReference type="Pfam" id="PF02527">
    <property type="entry name" value="GidB"/>
    <property type="match status" value="1"/>
</dbReference>
<dbReference type="PIRSF" id="PIRSF003078">
    <property type="entry name" value="GidB"/>
    <property type="match status" value="1"/>
</dbReference>
<dbReference type="SUPFAM" id="SSF53335">
    <property type="entry name" value="S-adenosyl-L-methionine-dependent methyltransferases"/>
    <property type="match status" value="1"/>
</dbReference>
<evidence type="ECO:0000255" key="1">
    <source>
        <dbReference type="HAMAP-Rule" id="MF_00074"/>
    </source>
</evidence>
<accession>Q8A8M2</accession>
<name>RSMG_BACTN</name>
<comment type="function">
    <text evidence="1">Specifically methylates the N7 position of a guanine in 16S rRNA.</text>
</comment>
<comment type="subcellular location">
    <subcellularLocation>
        <location evidence="1">Cytoplasm</location>
    </subcellularLocation>
</comment>
<comment type="similarity">
    <text evidence="1">Belongs to the methyltransferase superfamily. RNA methyltransferase RsmG family.</text>
</comment>
<reference key="1">
    <citation type="journal article" date="2003" name="Science">
        <title>A genomic view of the human-Bacteroides thetaiotaomicron symbiosis.</title>
        <authorList>
            <person name="Xu J."/>
            <person name="Bjursell M.K."/>
            <person name="Himrod J."/>
            <person name="Deng S."/>
            <person name="Carmichael L.K."/>
            <person name="Chiang H.C."/>
            <person name="Hooper L.V."/>
            <person name="Gordon J.I."/>
        </authorList>
    </citation>
    <scope>NUCLEOTIDE SEQUENCE [LARGE SCALE GENOMIC DNA]</scope>
    <source>
        <strain>ATCC 29148 / DSM 2079 / JCM 5827 / CCUG 10774 / NCTC 10582 / VPI-5482 / E50</strain>
    </source>
</reference>
<gene>
    <name evidence="1" type="primary">rsmG</name>
    <name type="ordered locus">BT_1145</name>
</gene>